<name>P2C32_ORYSJ</name>
<gene>
    <name type="ordered locus">Os03g0292100</name>
    <name type="ordered locus">LOC_Os03g18150</name>
</gene>
<reference key="1">
    <citation type="journal article" date="2005" name="Genome Res.">
        <title>Sequence, annotation, and analysis of synteny between rice chromosome 3 and diverged grass species.</title>
        <authorList>
            <consortium name="The rice chromosome 3 sequencing consortium"/>
            <person name="Buell C.R."/>
            <person name="Yuan Q."/>
            <person name="Ouyang S."/>
            <person name="Liu J."/>
            <person name="Zhu W."/>
            <person name="Wang A."/>
            <person name="Maiti R."/>
            <person name="Haas B."/>
            <person name="Wortman J."/>
            <person name="Pertea M."/>
            <person name="Jones K.M."/>
            <person name="Kim M."/>
            <person name="Overton L."/>
            <person name="Tsitrin T."/>
            <person name="Fadrosh D."/>
            <person name="Bera J."/>
            <person name="Weaver B."/>
            <person name="Jin S."/>
            <person name="Johri S."/>
            <person name="Reardon M."/>
            <person name="Webb K."/>
            <person name="Hill J."/>
            <person name="Moffat K."/>
            <person name="Tallon L."/>
            <person name="Van Aken S."/>
            <person name="Lewis M."/>
            <person name="Utterback T."/>
            <person name="Feldblyum T."/>
            <person name="Zismann V."/>
            <person name="Iobst S."/>
            <person name="Hsiao J."/>
            <person name="de Vazeille A.R."/>
            <person name="Salzberg S.L."/>
            <person name="White O."/>
            <person name="Fraser C.M."/>
            <person name="Yu Y."/>
            <person name="Kim H."/>
            <person name="Rambo T."/>
            <person name="Currie J."/>
            <person name="Collura K."/>
            <person name="Kernodle-Thompson S."/>
            <person name="Wei F."/>
            <person name="Kudrna K."/>
            <person name="Ammiraju J.S.S."/>
            <person name="Luo M."/>
            <person name="Goicoechea J.L."/>
            <person name="Wing R.A."/>
            <person name="Henry D."/>
            <person name="Oates R."/>
            <person name="Palmer M."/>
            <person name="Pries G."/>
            <person name="Saski C."/>
            <person name="Simmons J."/>
            <person name="Soderlund C."/>
            <person name="Nelson W."/>
            <person name="de la Bastide M."/>
            <person name="Spiegel L."/>
            <person name="Nascimento L."/>
            <person name="Huang E."/>
            <person name="Preston R."/>
            <person name="Zutavern T."/>
            <person name="Palmer L."/>
            <person name="O'Shaughnessy A."/>
            <person name="Dike S."/>
            <person name="McCombie W.R."/>
            <person name="Minx P."/>
            <person name="Cordum H."/>
            <person name="Wilson R."/>
            <person name="Jin W."/>
            <person name="Lee H.R."/>
            <person name="Jiang J."/>
            <person name="Jackson S."/>
        </authorList>
    </citation>
    <scope>NUCLEOTIDE SEQUENCE [LARGE SCALE GENOMIC DNA]</scope>
    <source>
        <strain>cv. Nipponbare</strain>
    </source>
</reference>
<reference key="2">
    <citation type="journal article" date="2005" name="Nature">
        <title>The map-based sequence of the rice genome.</title>
        <authorList>
            <consortium name="International rice genome sequencing project (IRGSP)"/>
        </authorList>
    </citation>
    <scope>NUCLEOTIDE SEQUENCE [LARGE SCALE GENOMIC DNA]</scope>
    <source>
        <strain>cv. Nipponbare</strain>
    </source>
</reference>
<reference key="3">
    <citation type="journal article" date="2008" name="Nucleic Acids Res.">
        <title>The rice annotation project database (RAP-DB): 2008 update.</title>
        <authorList>
            <consortium name="The rice annotation project (RAP)"/>
        </authorList>
    </citation>
    <scope>GENOME REANNOTATION</scope>
    <source>
        <strain>cv. Nipponbare</strain>
    </source>
</reference>
<reference key="4">
    <citation type="journal article" date="2013" name="Rice">
        <title>Improvement of the Oryza sativa Nipponbare reference genome using next generation sequence and optical map data.</title>
        <authorList>
            <person name="Kawahara Y."/>
            <person name="de la Bastide M."/>
            <person name="Hamilton J.P."/>
            <person name="Kanamori H."/>
            <person name="McCombie W.R."/>
            <person name="Ouyang S."/>
            <person name="Schwartz D.C."/>
            <person name="Tanaka T."/>
            <person name="Wu J."/>
            <person name="Zhou S."/>
            <person name="Childs K.L."/>
            <person name="Davidson R.M."/>
            <person name="Lin H."/>
            <person name="Quesada-Ocampo L."/>
            <person name="Vaillancourt B."/>
            <person name="Sakai H."/>
            <person name="Lee S.S."/>
            <person name="Kim J."/>
            <person name="Numa H."/>
            <person name="Itoh T."/>
            <person name="Buell C.R."/>
            <person name="Matsumoto T."/>
        </authorList>
    </citation>
    <scope>GENOME REANNOTATION</scope>
    <source>
        <strain>cv. Nipponbare</strain>
    </source>
</reference>
<reference key="5">
    <citation type="submission" date="2007-09" db="EMBL/GenBank/DDBJ databases">
        <title>Oryza sativa full length cDNA.</title>
        <authorList>
            <consortium name="The rice full-length cDNA consortium"/>
        </authorList>
    </citation>
    <scope>NUCLEOTIDE SEQUENCE [LARGE SCALE MRNA]</scope>
    <source>
        <strain>cv. Nipponbare</strain>
    </source>
</reference>
<reference key="6">
    <citation type="journal article" date="2008" name="BMC Genomics">
        <title>Genome-wide and expression analysis of protein phosphatase 2C in rice and Arabidopsis.</title>
        <authorList>
            <person name="Xue T."/>
            <person name="Wang D."/>
            <person name="Zhang S."/>
            <person name="Ehlting J."/>
            <person name="Ni F."/>
            <person name="Jacab S."/>
            <person name="Zheng C."/>
            <person name="Zhong Y."/>
        </authorList>
    </citation>
    <scope>GENE FAMILY</scope>
    <scope>NOMENCLATURE</scope>
</reference>
<organism>
    <name type="scientific">Oryza sativa subsp. japonica</name>
    <name type="common">Rice</name>
    <dbReference type="NCBI Taxonomy" id="39947"/>
    <lineage>
        <taxon>Eukaryota</taxon>
        <taxon>Viridiplantae</taxon>
        <taxon>Streptophyta</taxon>
        <taxon>Embryophyta</taxon>
        <taxon>Tracheophyta</taxon>
        <taxon>Spermatophyta</taxon>
        <taxon>Magnoliopsida</taxon>
        <taxon>Liliopsida</taxon>
        <taxon>Poales</taxon>
        <taxon>Poaceae</taxon>
        <taxon>BOP clade</taxon>
        <taxon>Oryzoideae</taxon>
        <taxon>Oryzeae</taxon>
        <taxon>Oryzinae</taxon>
        <taxon>Oryza</taxon>
        <taxon>Oryza sativa</taxon>
    </lineage>
</organism>
<evidence type="ECO:0000250" key="1"/>
<evidence type="ECO:0000255" key="2"/>
<evidence type="ECO:0000255" key="3">
    <source>
        <dbReference type="PROSITE-ProRule" id="PRU01082"/>
    </source>
</evidence>
<evidence type="ECO:0000256" key="4">
    <source>
        <dbReference type="SAM" id="MobiDB-lite"/>
    </source>
</evidence>
<evidence type="ECO:0000305" key="5"/>
<proteinExistence type="evidence at transcript level"/>
<feature type="chain" id="PRO_0000363278" description="Probable protein phosphatase 2C 32">
    <location>
        <begin position="1"/>
        <end position="391"/>
    </location>
</feature>
<feature type="transmembrane region" description="Helical" evidence="2">
    <location>
        <begin position="95"/>
        <end position="115"/>
    </location>
</feature>
<feature type="domain" description="PPM-type phosphatase" evidence="3">
    <location>
        <begin position="129"/>
        <end position="386"/>
    </location>
</feature>
<feature type="region of interest" description="Disordered" evidence="4">
    <location>
        <begin position="1"/>
        <end position="53"/>
    </location>
</feature>
<feature type="compositionally biased region" description="Low complexity" evidence="4">
    <location>
        <begin position="8"/>
        <end position="51"/>
    </location>
</feature>
<feature type="binding site" evidence="1">
    <location>
        <position position="168"/>
    </location>
    <ligand>
        <name>Mn(2+)</name>
        <dbReference type="ChEBI" id="CHEBI:29035"/>
        <label>1</label>
    </ligand>
</feature>
<feature type="binding site" evidence="1">
    <location>
        <position position="168"/>
    </location>
    <ligand>
        <name>Mn(2+)</name>
        <dbReference type="ChEBI" id="CHEBI:29035"/>
        <label>2</label>
    </ligand>
</feature>
<feature type="binding site" evidence="1">
    <location>
        <position position="169"/>
    </location>
    <ligand>
        <name>Mn(2+)</name>
        <dbReference type="ChEBI" id="CHEBI:29035"/>
        <label>1</label>
    </ligand>
</feature>
<feature type="binding site" evidence="1">
    <location>
        <position position="332"/>
    </location>
    <ligand>
        <name>Mn(2+)</name>
        <dbReference type="ChEBI" id="CHEBI:29035"/>
        <label>2</label>
    </ligand>
</feature>
<feature type="binding site" evidence="1">
    <location>
        <position position="377"/>
    </location>
    <ligand>
        <name>Mn(2+)</name>
        <dbReference type="ChEBI" id="CHEBI:29035"/>
        <label>2</label>
    </ligand>
</feature>
<accession>Q10MX1</accession>
<accession>A0A0P0VWY7</accession>
<sequence>MSCTVAIPSSPVFSPSRRPLSCKAASASASPESVSVAASSPAQAAPPAGSPLRPFALRAHLREEATPSPQPSAAAAAAVSAPAGSVLKRRRPAPLVVPVCGGAAAAAAAAAVAAVESDPRNEVEEDGEEFAVYCRRGKGRRRVEMEDRHVAKVALGGDPKVAFFGVFDGHGGKSAAEFVAENMPKFMAEEMCKVDGGDSGETEQAVKRCYLKTDEEFLKREESGGACCVTALLQKGGLVVSNAGDCRAVLSRAGKAEALTSDHRASREDERERIENLGGFVVNYRGTWRVQGSLAVSRGIGDAHLKQWVVSDPDTTTLGVDSQCEFLILASDGLWDKVENQEAVDIARPLYISNDKASRMTACRRLVETAVTRGSTDDISIVIIQLQQFSR</sequence>
<comment type="catalytic activity">
    <reaction>
        <text>O-phospho-L-seryl-[protein] + H2O = L-seryl-[protein] + phosphate</text>
        <dbReference type="Rhea" id="RHEA:20629"/>
        <dbReference type="Rhea" id="RHEA-COMP:9863"/>
        <dbReference type="Rhea" id="RHEA-COMP:11604"/>
        <dbReference type="ChEBI" id="CHEBI:15377"/>
        <dbReference type="ChEBI" id="CHEBI:29999"/>
        <dbReference type="ChEBI" id="CHEBI:43474"/>
        <dbReference type="ChEBI" id="CHEBI:83421"/>
        <dbReference type="EC" id="3.1.3.16"/>
    </reaction>
</comment>
<comment type="catalytic activity">
    <reaction>
        <text>O-phospho-L-threonyl-[protein] + H2O = L-threonyl-[protein] + phosphate</text>
        <dbReference type="Rhea" id="RHEA:47004"/>
        <dbReference type="Rhea" id="RHEA-COMP:11060"/>
        <dbReference type="Rhea" id="RHEA-COMP:11605"/>
        <dbReference type="ChEBI" id="CHEBI:15377"/>
        <dbReference type="ChEBI" id="CHEBI:30013"/>
        <dbReference type="ChEBI" id="CHEBI:43474"/>
        <dbReference type="ChEBI" id="CHEBI:61977"/>
        <dbReference type="EC" id="3.1.3.16"/>
    </reaction>
</comment>
<comment type="cofactor">
    <cofactor evidence="1">
        <name>Mg(2+)</name>
        <dbReference type="ChEBI" id="CHEBI:18420"/>
    </cofactor>
    <cofactor evidence="1">
        <name>Mn(2+)</name>
        <dbReference type="ChEBI" id="CHEBI:29035"/>
    </cofactor>
    <text evidence="1">Binds 2 magnesium or manganese ions per subunit.</text>
</comment>
<comment type="subcellular location">
    <subcellularLocation>
        <location evidence="5">Membrane</location>
        <topology evidence="5">Single-pass membrane protein</topology>
    </subcellularLocation>
</comment>
<comment type="similarity">
    <text evidence="5">Belongs to the PP2C family.</text>
</comment>
<comment type="sequence caution" evidence="5">
    <conflict type="erroneous gene model prediction">
        <sequence resource="EMBL-CDS" id="BAF11716"/>
    </conflict>
</comment>
<dbReference type="EC" id="3.1.3.16"/>
<dbReference type="EMBL" id="DP000009">
    <property type="protein sequence ID" value="ABF95403.1"/>
    <property type="molecule type" value="Genomic_DNA"/>
</dbReference>
<dbReference type="EMBL" id="AP008209">
    <property type="protein sequence ID" value="BAF11716.2"/>
    <property type="status" value="ALT_SEQ"/>
    <property type="molecule type" value="Genomic_DNA"/>
</dbReference>
<dbReference type="EMBL" id="AP014959">
    <property type="protein sequence ID" value="BAS83679.1"/>
    <property type="molecule type" value="Genomic_DNA"/>
</dbReference>
<dbReference type="EMBL" id="AK287695">
    <property type="status" value="NOT_ANNOTATED_CDS"/>
    <property type="molecule type" value="mRNA"/>
</dbReference>
<dbReference type="RefSeq" id="XP_015628169.1">
    <property type="nucleotide sequence ID" value="XM_015772683.1"/>
</dbReference>
<dbReference type="SMR" id="Q10MX1"/>
<dbReference type="FunCoup" id="Q10MX1">
    <property type="interactions" value="107"/>
</dbReference>
<dbReference type="STRING" id="39947.Q10MX1"/>
<dbReference type="PaxDb" id="39947-Q10MX1"/>
<dbReference type="EnsemblPlants" id="Os03t0292100-01">
    <property type="protein sequence ID" value="Os03t0292100-01"/>
    <property type="gene ID" value="Os03g0292100"/>
</dbReference>
<dbReference type="Gramene" id="Os03t0292100-01">
    <property type="protein sequence ID" value="Os03t0292100-01"/>
    <property type="gene ID" value="Os03g0292100"/>
</dbReference>
<dbReference type="KEGG" id="dosa:Os03g0292100"/>
<dbReference type="eggNOG" id="KOG0698">
    <property type="taxonomic scope" value="Eukaryota"/>
</dbReference>
<dbReference type="HOGENOM" id="CLU_013173_5_1_1"/>
<dbReference type="InParanoid" id="Q10MX1"/>
<dbReference type="OMA" id="CINNDKP"/>
<dbReference type="OrthoDB" id="10264738at2759"/>
<dbReference type="Proteomes" id="UP000000763">
    <property type="component" value="Chromosome 3"/>
</dbReference>
<dbReference type="Proteomes" id="UP000059680">
    <property type="component" value="Chromosome 3"/>
</dbReference>
<dbReference type="GO" id="GO:0016020">
    <property type="term" value="C:membrane"/>
    <property type="evidence" value="ECO:0007669"/>
    <property type="project" value="UniProtKB-SubCell"/>
</dbReference>
<dbReference type="GO" id="GO:0046872">
    <property type="term" value="F:metal ion binding"/>
    <property type="evidence" value="ECO:0007669"/>
    <property type="project" value="UniProtKB-KW"/>
</dbReference>
<dbReference type="GO" id="GO:0004722">
    <property type="term" value="F:protein serine/threonine phosphatase activity"/>
    <property type="evidence" value="ECO:0007669"/>
    <property type="project" value="UniProtKB-EC"/>
</dbReference>
<dbReference type="GO" id="GO:0009738">
    <property type="term" value="P:abscisic acid-activated signaling pathway"/>
    <property type="evidence" value="ECO:0000318"/>
    <property type="project" value="GO_Central"/>
</dbReference>
<dbReference type="CDD" id="cd00143">
    <property type="entry name" value="PP2Cc"/>
    <property type="match status" value="1"/>
</dbReference>
<dbReference type="FunFam" id="3.60.40.10:FF:000044">
    <property type="entry name" value="probable protein phosphatase 2C 25"/>
    <property type="match status" value="1"/>
</dbReference>
<dbReference type="Gene3D" id="3.60.40.10">
    <property type="entry name" value="PPM-type phosphatase domain"/>
    <property type="match status" value="1"/>
</dbReference>
<dbReference type="InterPro" id="IPR015655">
    <property type="entry name" value="PP2C"/>
</dbReference>
<dbReference type="InterPro" id="IPR000222">
    <property type="entry name" value="PP2C_BS"/>
</dbReference>
<dbReference type="InterPro" id="IPR036457">
    <property type="entry name" value="PPM-type-like_dom_sf"/>
</dbReference>
<dbReference type="InterPro" id="IPR001932">
    <property type="entry name" value="PPM-type_phosphatase-like_dom"/>
</dbReference>
<dbReference type="PANTHER" id="PTHR47992">
    <property type="entry name" value="PROTEIN PHOSPHATASE"/>
    <property type="match status" value="1"/>
</dbReference>
<dbReference type="Pfam" id="PF00481">
    <property type="entry name" value="PP2C"/>
    <property type="match status" value="1"/>
</dbReference>
<dbReference type="SMART" id="SM00331">
    <property type="entry name" value="PP2C_SIG"/>
    <property type="match status" value="1"/>
</dbReference>
<dbReference type="SMART" id="SM00332">
    <property type="entry name" value="PP2Cc"/>
    <property type="match status" value="1"/>
</dbReference>
<dbReference type="SUPFAM" id="SSF81606">
    <property type="entry name" value="PP2C-like"/>
    <property type="match status" value="1"/>
</dbReference>
<dbReference type="PROSITE" id="PS01032">
    <property type="entry name" value="PPM_1"/>
    <property type="match status" value="1"/>
</dbReference>
<dbReference type="PROSITE" id="PS51746">
    <property type="entry name" value="PPM_2"/>
    <property type="match status" value="1"/>
</dbReference>
<keyword id="KW-0378">Hydrolase</keyword>
<keyword id="KW-0460">Magnesium</keyword>
<keyword id="KW-0464">Manganese</keyword>
<keyword id="KW-0472">Membrane</keyword>
<keyword id="KW-0479">Metal-binding</keyword>
<keyword id="KW-0904">Protein phosphatase</keyword>
<keyword id="KW-1185">Reference proteome</keyword>
<keyword id="KW-0812">Transmembrane</keyword>
<keyword id="KW-1133">Transmembrane helix</keyword>
<protein>
    <recommendedName>
        <fullName>Probable protein phosphatase 2C 32</fullName>
        <shortName>OsPP2C32</shortName>
        <ecNumber>3.1.3.16</ecNumber>
    </recommendedName>
</protein>